<name>RECR_RHILO</name>
<proteinExistence type="inferred from homology"/>
<reference key="1">
    <citation type="journal article" date="2000" name="DNA Res.">
        <title>Complete genome structure of the nitrogen-fixing symbiotic bacterium Mesorhizobium loti.</title>
        <authorList>
            <person name="Kaneko T."/>
            <person name="Nakamura Y."/>
            <person name="Sato S."/>
            <person name="Asamizu E."/>
            <person name="Kato T."/>
            <person name="Sasamoto S."/>
            <person name="Watanabe A."/>
            <person name="Idesawa K."/>
            <person name="Ishikawa A."/>
            <person name="Kawashima K."/>
            <person name="Kimura T."/>
            <person name="Kishida Y."/>
            <person name="Kiyokawa C."/>
            <person name="Kohara M."/>
            <person name="Matsumoto M."/>
            <person name="Matsuno A."/>
            <person name="Mochizuki Y."/>
            <person name="Nakayama S."/>
            <person name="Nakazaki N."/>
            <person name="Shimpo S."/>
            <person name="Sugimoto M."/>
            <person name="Takeuchi C."/>
            <person name="Yamada M."/>
            <person name="Tabata S."/>
        </authorList>
    </citation>
    <scope>NUCLEOTIDE SEQUENCE [LARGE SCALE GENOMIC DNA]</scope>
    <source>
        <strain>LMG 29417 / CECT 9101 / MAFF 303099</strain>
    </source>
</reference>
<sequence length="201" mass="21463">MSKRIAGPEIERLIQLLAKVPGLGPRSARRAALHLIKKKEQLLSPLAAAMSEAADKVRICSTCGNVDTADPCMICTDPRRDAGTIIVVEDVSDLWALERAAAMNVRYHVLGGTLSPLDGIGPDQLNIRSLIDRVAGGEVKEIILAVNATVEGQTTAHYLTDQLSGFDIKVTRLAHGVPVGGELDYLDEGTLAAALRSRTAF</sequence>
<gene>
    <name evidence="1" type="primary">recR</name>
    <name type="ordered locus">mlr5510</name>
</gene>
<organism>
    <name type="scientific">Mesorhizobium japonicum (strain LMG 29417 / CECT 9101 / MAFF 303099)</name>
    <name type="common">Mesorhizobium loti (strain MAFF 303099)</name>
    <dbReference type="NCBI Taxonomy" id="266835"/>
    <lineage>
        <taxon>Bacteria</taxon>
        <taxon>Pseudomonadati</taxon>
        <taxon>Pseudomonadota</taxon>
        <taxon>Alphaproteobacteria</taxon>
        <taxon>Hyphomicrobiales</taxon>
        <taxon>Phyllobacteriaceae</taxon>
        <taxon>Mesorhizobium</taxon>
    </lineage>
</organism>
<evidence type="ECO:0000255" key="1">
    <source>
        <dbReference type="HAMAP-Rule" id="MF_00017"/>
    </source>
</evidence>
<comment type="function">
    <text evidence="1">May play a role in DNA repair. It seems to be involved in an RecBC-independent recombinational process of DNA repair. It may act with RecF and RecO.</text>
</comment>
<comment type="similarity">
    <text evidence="1">Belongs to the RecR family.</text>
</comment>
<feature type="chain" id="PRO_0000190370" description="Recombination protein RecR">
    <location>
        <begin position="1"/>
        <end position="201"/>
    </location>
</feature>
<feature type="domain" description="Toprim" evidence="1">
    <location>
        <begin position="83"/>
        <end position="178"/>
    </location>
</feature>
<feature type="zinc finger region" description="C4-type" evidence="1">
    <location>
        <begin position="60"/>
        <end position="75"/>
    </location>
</feature>
<accession>Q98BM4</accession>
<protein>
    <recommendedName>
        <fullName evidence="1">Recombination protein RecR</fullName>
    </recommendedName>
</protein>
<dbReference type="EMBL" id="BA000012">
    <property type="protein sequence ID" value="BAB51948.1"/>
    <property type="molecule type" value="Genomic_DNA"/>
</dbReference>
<dbReference type="RefSeq" id="WP_010913286.1">
    <property type="nucleotide sequence ID" value="NC_002678.2"/>
</dbReference>
<dbReference type="SMR" id="Q98BM4"/>
<dbReference type="KEGG" id="mlo:mlr5510"/>
<dbReference type="PATRIC" id="fig|266835.9.peg.4378"/>
<dbReference type="eggNOG" id="COG0353">
    <property type="taxonomic scope" value="Bacteria"/>
</dbReference>
<dbReference type="HOGENOM" id="CLU_060739_1_1_5"/>
<dbReference type="Proteomes" id="UP000000552">
    <property type="component" value="Chromosome"/>
</dbReference>
<dbReference type="GO" id="GO:0003677">
    <property type="term" value="F:DNA binding"/>
    <property type="evidence" value="ECO:0007669"/>
    <property type="project" value="UniProtKB-UniRule"/>
</dbReference>
<dbReference type="GO" id="GO:0008270">
    <property type="term" value="F:zinc ion binding"/>
    <property type="evidence" value="ECO:0007669"/>
    <property type="project" value="UniProtKB-KW"/>
</dbReference>
<dbReference type="GO" id="GO:0006310">
    <property type="term" value="P:DNA recombination"/>
    <property type="evidence" value="ECO:0007669"/>
    <property type="project" value="UniProtKB-UniRule"/>
</dbReference>
<dbReference type="GO" id="GO:0006281">
    <property type="term" value="P:DNA repair"/>
    <property type="evidence" value="ECO:0007669"/>
    <property type="project" value="UniProtKB-UniRule"/>
</dbReference>
<dbReference type="CDD" id="cd01025">
    <property type="entry name" value="TOPRIM_recR"/>
    <property type="match status" value="1"/>
</dbReference>
<dbReference type="Gene3D" id="3.40.1360.10">
    <property type="match status" value="1"/>
</dbReference>
<dbReference type="Gene3D" id="6.10.250.240">
    <property type="match status" value="1"/>
</dbReference>
<dbReference type="Gene3D" id="1.10.8.420">
    <property type="entry name" value="RecR Domain 1"/>
    <property type="match status" value="1"/>
</dbReference>
<dbReference type="HAMAP" id="MF_00017">
    <property type="entry name" value="RecR"/>
    <property type="match status" value="1"/>
</dbReference>
<dbReference type="InterPro" id="IPR000093">
    <property type="entry name" value="DNA_Rcmb_RecR"/>
</dbReference>
<dbReference type="InterPro" id="IPR023627">
    <property type="entry name" value="Rcmb_RecR"/>
</dbReference>
<dbReference type="InterPro" id="IPR015967">
    <property type="entry name" value="Rcmb_RecR_Znf"/>
</dbReference>
<dbReference type="InterPro" id="IPR006171">
    <property type="entry name" value="TOPRIM_dom"/>
</dbReference>
<dbReference type="InterPro" id="IPR034137">
    <property type="entry name" value="TOPRIM_RecR"/>
</dbReference>
<dbReference type="NCBIfam" id="TIGR00615">
    <property type="entry name" value="recR"/>
    <property type="match status" value="1"/>
</dbReference>
<dbReference type="PANTHER" id="PTHR30446">
    <property type="entry name" value="RECOMBINATION PROTEIN RECR"/>
    <property type="match status" value="1"/>
</dbReference>
<dbReference type="PANTHER" id="PTHR30446:SF0">
    <property type="entry name" value="RECOMBINATION PROTEIN RECR"/>
    <property type="match status" value="1"/>
</dbReference>
<dbReference type="Pfam" id="PF21175">
    <property type="entry name" value="RecR_C"/>
    <property type="match status" value="1"/>
</dbReference>
<dbReference type="Pfam" id="PF21176">
    <property type="entry name" value="RecR_HhH"/>
    <property type="match status" value="1"/>
</dbReference>
<dbReference type="Pfam" id="PF02132">
    <property type="entry name" value="RecR_ZnF"/>
    <property type="match status" value="1"/>
</dbReference>
<dbReference type="Pfam" id="PF13662">
    <property type="entry name" value="Toprim_4"/>
    <property type="match status" value="1"/>
</dbReference>
<dbReference type="SMART" id="SM00493">
    <property type="entry name" value="TOPRIM"/>
    <property type="match status" value="1"/>
</dbReference>
<dbReference type="SUPFAM" id="SSF111304">
    <property type="entry name" value="Recombination protein RecR"/>
    <property type="match status" value="1"/>
</dbReference>
<dbReference type="PROSITE" id="PS01300">
    <property type="entry name" value="RECR"/>
    <property type="match status" value="1"/>
</dbReference>
<dbReference type="PROSITE" id="PS50880">
    <property type="entry name" value="TOPRIM"/>
    <property type="match status" value="1"/>
</dbReference>
<keyword id="KW-0227">DNA damage</keyword>
<keyword id="KW-0233">DNA recombination</keyword>
<keyword id="KW-0234">DNA repair</keyword>
<keyword id="KW-0479">Metal-binding</keyword>
<keyword id="KW-0862">Zinc</keyword>
<keyword id="KW-0863">Zinc-finger</keyword>